<name>ELF5_ARATH</name>
<sequence>MKTTKGGKVMNPTDAYRKQIRKREIKRNKKERQKVREVGILKKDPEQIKDQIRKLDMSKAEGALDKARKHKKRQLEDTLKMVVKKRKEYDEKKKEQGEATTSVMFSHLPPQRRLTGEEDLKPEDSVYYHPTLNPTGAPPPGKPPMYNSSIGLAISSDGASSSSAALSSITESEDSVLVNPPPLPPLPDGDNALSASLPLPPLPPLPPTTGLTLPHSPFPPPPPGPPPKEQDFVRPPLPPPPQLPQSSQPPPPGLSGSQGDGRFPESSDFTFDNRMNANITSVPLLPPPGIPSNESESRPAESNASSFQNANLSKMVAPPPPAPLHQQHQSTFAGAAASLTNFQPDVHPPPGMLRFPPPPPPLDMHPPHPGMFVGHLIPRPPYGPPPGPPPMMRPPLPPGPPPSSFQDGQAMIRPYVPNKPSFVKSAAPTVVRRPLAQHTPELTSMVPASVRVRRESATVTKPKPKTSIASSLSFTPRAMASAATVKVEPAKTSAASKPQSIDDSYTAFLEDMKALGALDG</sequence>
<proteinExistence type="evidence at protein level"/>
<evidence type="ECO:0000255" key="1">
    <source>
        <dbReference type="PROSITE-ProRule" id="PRU00768"/>
    </source>
</evidence>
<evidence type="ECO:0000256" key="2">
    <source>
        <dbReference type="SAM" id="MobiDB-lite"/>
    </source>
</evidence>
<evidence type="ECO:0000269" key="3">
    <source>
    </source>
</evidence>
<evidence type="ECO:0000303" key="4">
    <source>
    </source>
</evidence>
<evidence type="ECO:0000312" key="5">
    <source>
        <dbReference type="Araport" id="AT5G62640"/>
    </source>
</evidence>
<evidence type="ECO:0000312" key="6">
    <source>
        <dbReference type="EMBL" id="BAA97211.1"/>
    </source>
</evidence>
<organism>
    <name type="scientific">Arabidopsis thaliana</name>
    <name type="common">Mouse-ear cress</name>
    <dbReference type="NCBI Taxonomy" id="3702"/>
    <lineage>
        <taxon>Eukaryota</taxon>
        <taxon>Viridiplantae</taxon>
        <taxon>Streptophyta</taxon>
        <taxon>Embryophyta</taxon>
        <taxon>Tracheophyta</taxon>
        <taxon>Spermatophyta</taxon>
        <taxon>Magnoliopsida</taxon>
        <taxon>eudicotyledons</taxon>
        <taxon>Gunneridae</taxon>
        <taxon>Pentapetalae</taxon>
        <taxon>rosids</taxon>
        <taxon>malvids</taxon>
        <taxon>Brassicales</taxon>
        <taxon>Brassicaceae</taxon>
        <taxon>Camelineae</taxon>
        <taxon>Arabidopsis</taxon>
    </lineage>
</organism>
<feature type="chain" id="PRO_0000445473" description="Protein EARLY FLOWERING 5">
    <location>
        <begin position="1"/>
        <end position="520"/>
    </location>
</feature>
<feature type="region of interest" description="Disordered" evidence="2">
    <location>
        <begin position="83"/>
        <end position="410"/>
    </location>
</feature>
<feature type="short sequence motif" description="Nuclear localization signal 1" evidence="1">
    <location>
        <begin position="16"/>
        <end position="23"/>
    </location>
</feature>
<feature type="short sequence motif" description="Nuclear localization signal 2" evidence="1">
    <location>
        <begin position="52"/>
        <end position="59"/>
    </location>
</feature>
<feature type="short sequence motif" description="Nuclear localization signal 3" evidence="1">
    <location>
        <begin position="71"/>
        <end position="78"/>
    </location>
</feature>
<feature type="compositionally biased region" description="Basic and acidic residues" evidence="2">
    <location>
        <begin position="87"/>
        <end position="97"/>
    </location>
</feature>
<feature type="compositionally biased region" description="Basic and acidic residues" evidence="2">
    <location>
        <begin position="114"/>
        <end position="126"/>
    </location>
</feature>
<feature type="compositionally biased region" description="Low complexity" evidence="2">
    <location>
        <begin position="148"/>
        <end position="168"/>
    </location>
</feature>
<feature type="compositionally biased region" description="Pro residues" evidence="2">
    <location>
        <begin position="198"/>
        <end position="207"/>
    </location>
</feature>
<feature type="compositionally biased region" description="Pro residues" evidence="2">
    <location>
        <begin position="216"/>
        <end position="227"/>
    </location>
</feature>
<feature type="compositionally biased region" description="Pro residues" evidence="2">
    <location>
        <begin position="235"/>
        <end position="253"/>
    </location>
</feature>
<feature type="compositionally biased region" description="Polar residues" evidence="2">
    <location>
        <begin position="267"/>
        <end position="281"/>
    </location>
</feature>
<feature type="compositionally biased region" description="Polar residues" evidence="2">
    <location>
        <begin position="300"/>
        <end position="312"/>
    </location>
</feature>
<feature type="compositionally biased region" description="Polar residues" evidence="2">
    <location>
        <begin position="326"/>
        <end position="343"/>
    </location>
</feature>
<feature type="compositionally biased region" description="Pro residues" evidence="2">
    <location>
        <begin position="346"/>
        <end position="369"/>
    </location>
</feature>
<feature type="compositionally biased region" description="Pro residues" evidence="2">
    <location>
        <begin position="378"/>
        <end position="403"/>
    </location>
</feature>
<feature type="splice variant" id="VSP_059873" description="In isoform 2.">
    <location>
        <begin position="151"/>
        <end position="156"/>
    </location>
</feature>
<reference key="1">
    <citation type="journal article" date="2004" name="Plant J.">
        <title>EARLY FLOWERING 5 acts as a floral repressor in Arabidopsis.</title>
        <authorList>
            <person name="Noh Y.-S."/>
            <person name="Bizzell C.M."/>
            <person name="Noh B."/>
            <person name="Schomburg F.M."/>
            <person name="Amasino R.M."/>
        </authorList>
    </citation>
    <scope>NUCLEOTIDE SEQUENCE [MRNA] (ISOFORM 2)</scope>
    <scope>FUNCTION</scope>
    <scope>DISRUPTION PHENOTYPE</scope>
    <scope>SUBCELLULAR LOCATION</scope>
    <scope>TISSUE SPECIFICITY</scope>
    <source>
        <strain>cv. Columbia</strain>
        <strain>cv. Wassilewskija</strain>
    </source>
</reference>
<reference key="2">
    <citation type="journal article" date="2000" name="DNA Res.">
        <title>Structural analysis of Arabidopsis thaliana chromosome 5. X. Sequence features of the regions of 3,076,755 bp covered by sixty P1 and TAC clones.</title>
        <authorList>
            <person name="Sato S."/>
            <person name="Nakamura Y."/>
            <person name="Kaneko T."/>
            <person name="Katoh T."/>
            <person name="Asamizu E."/>
            <person name="Kotani H."/>
            <person name="Tabata S."/>
        </authorList>
    </citation>
    <scope>NUCLEOTIDE SEQUENCE [LARGE SCALE GENOMIC DNA]</scope>
    <source>
        <strain>cv. Columbia</strain>
    </source>
</reference>
<reference key="3">
    <citation type="journal article" date="2017" name="Plant J.">
        <title>Araport11: a complete reannotation of the Arabidopsis thaliana reference genome.</title>
        <authorList>
            <person name="Cheng C.Y."/>
            <person name="Krishnakumar V."/>
            <person name="Chan A.P."/>
            <person name="Thibaud-Nissen F."/>
            <person name="Schobel S."/>
            <person name="Town C.D."/>
        </authorList>
    </citation>
    <scope>GENOME REANNOTATION</scope>
    <source>
        <strain>cv. Columbia</strain>
    </source>
</reference>
<reference key="4">
    <citation type="journal article" date="2003" name="Science">
        <title>Empirical analysis of transcriptional activity in the Arabidopsis genome.</title>
        <authorList>
            <person name="Yamada K."/>
            <person name="Lim J."/>
            <person name="Dale J.M."/>
            <person name="Chen H."/>
            <person name="Shinn P."/>
            <person name="Palm C.J."/>
            <person name="Southwick A.M."/>
            <person name="Wu H.C."/>
            <person name="Kim C.J."/>
            <person name="Nguyen M."/>
            <person name="Pham P.K."/>
            <person name="Cheuk R.F."/>
            <person name="Karlin-Newmann G."/>
            <person name="Liu S.X."/>
            <person name="Lam B."/>
            <person name="Sakano H."/>
            <person name="Wu T."/>
            <person name="Yu G."/>
            <person name="Miranda M."/>
            <person name="Quach H.L."/>
            <person name="Tripp M."/>
            <person name="Chang C.H."/>
            <person name="Lee J.M."/>
            <person name="Toriumi M.J."/>
            <person name="Chan M.M."/>
            <person name="Tang C.C."/>
            <person name="Onodera C.S."/>
            <person name="Deng J.M."/>
            <person name="Akiyama K."/>
            <person name="Ansari Y."/>
            <person name="Arakawa T."/>
            <person name="Banh J."/>
            <person name="Banno F."/>
            <person name="Bowser L."/>
            <person name="Brooks S.Y."/>
            <person name="Carninci P."/>
            <person name="Chao Q."/>
            <person name="Choy N."/>
            <person name="Enju A."/>
            <person name="Goldsmith A.D."/>
            <person name="Gurjal M."/>
            <person name="Hansen N.F."/>
            <person name="Hayashizaki Y."/>
            <person name="Johnson-Hopson C."/>
            <person name="Hsuan V.W."/>
            <person name="Iida K."/>
            <person name="Karnes M."/>
            <person name="Khan S."/>
            <person name="Koesema E."/>
            <person name="Ishida J."/>
            <person name="Jiang P.X."/>
            <person name="Jones T."/>
            <person name="Kawai J."/>
            <person name="Kamiya A."/>
            <person name="Meyers C."/>
            <person name="Nakajima M."/>
            <person name="Narusaka M."/>
            <person name="Seki M."/>
            <person name="Sakurai T."/>
            <person name="Satou M."/>
            <person name="Tamse R."/>
            <person name="Vaysberg M."/>
            <person name="Wallender E.K."/>
            <person name="Wong C."/>
            <person name="Yamamura Y."/>
            <person name="Yuan S."/>
            <person name="Shinozaki K."/>
            <person name="Davis R.W."/>
            <person name="Theologis A."/>
            <person name="Ecker J.R."/>
        </authorList>
    </citation>
    <scope>NUCLEOTIDE SEQUENCE [LARGE SCALE MRNA] (ISOFORM 1)</scope>
    <source>
        <strain>cv. Columbia</strain>
    </source>
</reference>
<reference key="5">
    <citation type="journal article" date="2009" name="Plant Physiol.">
        <title>Large-scale Arabidopsis phosphoproteome profiling reveals novel chloroplast kinase substrates and phosphorylation networks.</title>
        <authorList>
            <person name="Reiland S."/>
            <person name="Messerli G."/>
            <person name="Baerenfaller K."/>
            <person name="Gerrits B."/>
            <person name="Endler A."/>
            <person name="Grossmann J."/>
            <person name="Gruissem W."/>
            <person name="Baginsky S."/>
        </authorList>
    </citation>
    <scope>IDENTIFICATION BY MASS SPECTROMETRY [LARGE SCALE ANALYSIS]</scope>
</reference>
<accession>Q9LV14</accession>
<accession>Q6QTF1</accession>
<dbReference type="EMBL" id="AY526094">
    <property type="protein sequence ID" value="AAS19471.1"/>
    <property type="molecule type" value="mRNA"/>
</dbReference>
<dbReference type="EMBL" id="AB020751">
    <property type="protein sequence ID" value="BAA97211.1"/>
    <property type="molecule type" value="Genomic_DNA"/>
</dbReference>
<dbReference type="EMBL" id="CP002688">
    <property type="protein sequence ID" value="AED97636.1"/>
    <property type="molecule type" value="Genomic_DNA"/>
</dbReference>
<dbReference type="EMBL" id="CP002688">
    <property type="protein sequence ID" value="AED97637.1"/>
    <property type="molecule type" value="Genomic_DNA"/>
</dbReference>
<dbReference type="EMBL" id="AF361818">
    <property type="protein sequence ID" value="AAK32831.1"/>
    <property type="molecule type" value="mRNA"/>
</dbReference>
<dbReference type="EMBL" id="BT002708">
    <property type="protein sequence ID" value="AAO11624.1"/>
    <property type="molecule type" value="mRNA"/>
</dbReference>
<dbReference type="RefSeq" id="NP_001032126.1">
    <molecule id="Q9LV14-2"/>
    <property type="nucleotide sequence ID" value="NM_001037049.1"/>
</dbReference>
<dbReference type="RefSeq" id="NP_201070.1">
    <molecule id="Q9LV14-1"/>
    <property type="nucleotide sequence ID" value="NM_125659.4"/>
</dbReference>
<dbReference type="SMR" id="Q9LV14"/>
<dbReference type="FunCoup" id="Q9LV14">
    <property type="interactions" value="1067"/>
</dbReference>
<dbReference type="STRING" id="3702.Q9LV14"/>
<dbReference type="iPTMnet" id="Q9LV14"/>
<dbReference type="PaxDb" id="3702-AT5G62640.3"/>
<dbReference type="ProteomicsDB" id="221943">
    <molecule id="Q9LV14-1"/>
</dbReference>
<dbReference type="EnsemblPlants" id="AT5G62640.1">
    <molecule id="Q9LV14-1"/>
    <property type="protein sequence ID" value="AT5G62640.1"/>
    <property type="gene ID" value="AT5G62640"/>
</dbReference>
<dbReference type="EnsemblPlants" id="AT5G62640.2">
    <molecule id="Q9LV14-2"/>
    <property type="protein sequence ID" value="AT5G62640.2"/>
    <property type="gene ID" value="AT5G62640"/>
</dbReference>
<dbReference type="GeneID" id="836385"/>
<dbReference type="Gramene" id="AT5G62640.1">
    <molecule id="Q9LV14-1"/>
    <property type="protein sequence ID" value="AT5G62640.1"/>
    <property type="gene ID" value="AT5G62640"/>
</dbReference>
<dbReference type="Gramene" id="AT5G62640.2">
    <molecule id="Q9LV14-2"/>
    <property type="protein sequence ID" value="AT5G62640.2"/>
    <property type="gene ID" value="AT5G62640"/>
</dbReference>
<dbReference type="KEGG" id="ath:AT5G62640"/>
<dbReference type="Araport" id="AT5G62640"/>
<dbReference type="TAIR" id="AT5G62640">
    <property type="gene designation" value="ELF5"/>
</dbReference>
<dbReference type="HOGENOM" id="CLU_044269_1_0_1"/>
<dbReference type="InParanoid" id="Q9LV14"/>
<dbReference type="OMA" id="FGMRMPP"/>
<dbReference type="PhylomeDB" id="Q9LV14"/>
<dbReference type="PRO" id="PR:Q9LV14"/>
<dbReference type="Proteomes" id="UP000006548">
    <property type="component" value="Chromosome 5"/>
</dbReference>
<dbReference type="ExpressionAtlas" id="Q9LV14">
    <property type="expression patterns" value="baseline and differential"/>
</dbReference>
<dbReference type="GO" id="GO:0005634">
    <property type="term" value="C:nucleus"/>
    <property type="evidence" value="ECO:0000314"/>
    <property type="project" value="UniProtKB"/>
</dbReference>
<dbReference type="GO" id="GO:0009908">
    <property type="term" value="P:flower development"/>
    <property type="evidence" value="ECO:0007669"/>
    <property type="project" value="UniProtKB-KW"/>
</dbReference>
<dbReference type="GO" id="GO:2000028">
    <property type="term" value="P:regulation of photoperiodism, flowering"/>
    <property type="evidence" value="ECO:0000315"/>
    <property type="project" value="UniProtKB"/>
</dbReference>
<dbReference type="GO" id="GO:0006396">
    <property type="term" value="P:RNA processing"/>
    <property type="evidence" value="ECO:0007669"/>
    <property type="project" value="InterPro"/>
</dbReference>
<dbReference type="InterPro" id="IPR019007">
    <property type="entry name" value="WW_dom-bd_prot_11"/>
</dbReference>
<dbReference type="PANTHER" id="PTHR13361">
    <property type="entry name" value="WW DOMAIN-BINDING PROTEIN 11"/>
    <property type="match status" value="1"/>
</dbReference>
<dbReference type="PANTHER" id="PTHR13361:SF1">
    <property type="entry name" value="WW DOMAIN-BINDING PROTEIN 11"/>
    <property type="match status" value="1"/>
</dbReference>
<dbReference type="Pfam" id="PF12622">
    <property type="entry name" value="NpwBP"/>
    <property type="match status" value="1"/>
</dbReference>
<dbReference type="Pfam" id="PF09429">
    <property type="entry name" value="Wbp11"/>
    <property type="match status" value="1"/>
</dbReference>
<protein>
    <recommendedName>
        <fullName evidence="4">Protein EARLY FLOWERING 5</fullName>
        <shortName evidence="4">AtELF5</shortName>
    </recommendedName>
</protein>
<keyword id="KW-0025">Alternative splicing</keyword>
<keyword id="KW-0287">Flowering</keyword>
<keyword id="KW-0539">Nucleus</keyword>
<keyword id="KW-1185">Reference proteome</keyword>
<comment type="function">
    <text evidence="3">Involved in the regulation of flowering time in both long and short days.</text>
</comment>
<comment type="subcellular location">
    <subcellularLocation>
        <location evidence="1 3">Nucleus</location>
    </subcellularLocation>
</comment>
<comment type="alternative products">
    <event type="alternative splicing"/>
    <isoform>
        <id>Q9LV14-1</id>
        <name>1</name>
        <sequence type="displayed"/>
    </isoform>
    <isoform>
        <id>Q9LV14-2</id>
        <name>2</name>
        <sequence type="described" ref="VSP_059873"/>
    </isoform>
</comment>
<comment type="tissue specificity">
    <text evidence="3">In seedlings, mostly expressed in the shoot apical meristem (SAM) and root tip.</text>
</comment>
<comment type="disruption phenotype">
    <text evidence="3">Early flowering in both long and short days associated with reduced levels of FLC.</text>
</comment>
<gene>
    <name evidence="4" type="primary">ELF5</name>
    <name evidence="5" type="ordered locus">At5g62640</name>
    <name evidence="6" type="ORF">MRG21.6</name>
</gene>